<organism>
    <name type="scientific">Streptococcus pneumoniae (strain 70585)</name>
    <dbReference type="NCBI Taxonomy" id="488221"/>
    <lineage>
        <taxon>Bacteria</taxon>
        <taxon>Bacillati</taxon>
        <taxon>Bacillota</taxon>
        <taxon>Bacilli</taxon>
        <taxon>Lactobacillales</taxon>
        <taxon>Streptococcaceae</taxon>
        <taxon>Streptococcus</taxon>
    </lineage>
</organism>
<dbReference type="EC" id="6.2.1.54" evidence="1"/>
<dbReference type="EMBL" id="CP000918">
    <property type="protein sequence ID" value="ACO16178.1"/>
    <property type="molecule type" value="Genomic_DNA"/>
</dbReference>
<dbReference type="RefSeq" id="WP_012677121.1">
    <property type="nucleotide sequence ID" value="NC_012468.1"/>
</dbReference>
<dbReference type="SMR" id="C1CB20"/>
<dbReference type="KEGG" id="snm:SP70585_2304"/>
<dbReference type="HOGENOM" id="CLU_000022_2_12_9"/>
<dbReference type="UniPathway" id="UPA00556"/>
<dbReference type="Proteomes" id="UP000002211">
    <property type="component" value="Chromosome"/>
</dbReference>
<dbReference type="GO" id="GO:0005737">
    <property type="term" value="C:cytoplasm"/>
    <property type="evidence" value="ECO:0007669"/>
    <property type="project" value="UniProtKB-SubCell"/>
</dbReference>
<dbReference type="GO" id="GO:0005524">
    <property type="term" value="F:ATP binding"/>
    <property type="evidence" value="ECO:0007669"/>
    <property type="project" value="UniProtKB-KW"/>
</dbReference>
<dbReference type="GO" id="GO:0047473">
    <property type="term" value="F:D-alanine [D-alanyl carrier protein] ligase activity"/>
    <property type="evidence" value="ECO:0007669"/>
    <property type="project" value="UniProtKB-UniRule"/>
</dbReference>
<dbReference type="GO" id="GO:0070395">
    <property type="term" value="P:lipoteichoic acid biosynthetic process"/>
    <property type="evidence" value="ECO:0007669"/>
    <property type="project" value="UniProtKB-UniRule"/>
</dbReference>
<dbReference type="CDD" id="cd05945">
    <property type="entry name" value="DltA"/>
    <property type="match status" value="1"/>
</dbReference>
<dbReference type="FunFam" id="3.30.300.30:FF:000012">
    <property type="entry name" value="D-alanine--D-alanyl carrier protein ligase"/>
    <property type="match status" value="1"/>
</dbReference>
<dbReference type="Gene3D" id="3.30.300.30">
    <property type="match status" value="1"/>
</dbReference>
<dbReference type="Gene3D" id="3.40.50.12780">
    <property type="entry name" value="N-terminal domain of ligase-like"/>
    <property type="match status" value="1"/>
</dbReference>
<dbReference type="HAMAP" id="MF_00593">
    <property type="entry name" value="DltA"/>
    <property type="match status" value="1"/>
</dbReference>
<dbReference type="InterPro" id="IPR010071">
    <property type="entry name" value="AA_adenyl_dom"/>
</dbReference>
<dbReference type="InterPro" id="IPR025110">
    <property type="entry name" value="AMP-bd_C"/>
</dbReference>
<dbReference type="InterPro" id="IPR045851">
    <property type="entry name" value="AMP-bd_C_sf"/>
</dbReference>
<dbReference type="InterPro" id="IPR020845">
    <property type="entry name" value="AMP-binding_CS"/>
</dbReference>
<dbReference type="InterPro" id="IPR000873">
    <property type="entry name" value="AMP-dep_synth/lig_dom"/>
</dbReference>
<dbReference type="InterPro" id="IPR042099">
    <property type="entry name" value="ANL_N_sf"/>
</dbReference>
<dbReference type="InterPro" id="IPR010072">
    <property type="entry name" value="DltA"/>
</dbReference>
<dbReference type="InterPro" id="IPR044507">
    <property type="entry name" value="DltA-like"/>
</dbReference>
<dbReference type="NCBIfam" id="TIGR01733">
    <property type="entry name" value="AA-adenyl-dom"/>
    <property type="match status" value="1"/>
</dbReference>
<dbReference type="NCBIfam" id="TIGR01734">
    <property type="entry name" value="D-ala-DACP-lig"/>
    <property type="match status" value="1"/>
</dbReference>
<dbReference type="NCBIfam" id="NF003417">
    <property type="entry name" value="PRK04813.1"/>
    <property type="match status" value="1"/>
</dbReference>
<dbReference type="PANTHER" id="PTHR45398">
    <property type="match status" value="1"/>
</dbReference>
<dbReference type="PANTHER" id="PTHR45398:SF1">
    <property type="entry name" value="ENZYME, PUTATIVE (JCVI)-RELATED"/>
    <property type="match status" value="1"/>
</dbReference>
<dbReference type="Pfam" id="PF00501">
    <property type="entry name" value="AMP-binding"/>
    <property type="match status" value="1"/>
</dbReference>
<dbReference type="Pfam" id="PF13193">
    <property type="entry name" value="AMP-binding_C"/>
    <property type="match status" value="1"/>
</dbReference>
<dbReference type="SUPFAM" id="SSF56801">
    <property type="entry name" value="Acetyl-CoA synthetase-like"/>
    <property type="match status" value="1"/>
</dbReference>
<dbReference type="PROSITE" id="PS00455">
    <property type="entry name" value="AMP_BINDING"/>
    <property type="match status" value="1"/>
</dbReference>
<reference key="1">
    <citation type="journal article" date="2010" name="Genome Biol.">
        <title>Structure and dynamics of the pan-genome of Streptococcus pneumoniae and closely related species.</title>
        <authorList>
            <person name="Donati C."/>
            <person name="Hiller N.L."/>
            <person name="Tettelin H."/>
            <person name="Muzzi A."/>
            <person name="Croucher N.J."/>
            <person name="Angiuoli S.V."/>
            <person name="Oggioni M."/>
            <person name="Dunning Hotopp J.C."/>
            <person name="Hu F.Z."/>
            <person name="Riley D.R."/>
            <person name="Covacci A."/>
            <person name="Mitchell T.J."/>
            <person name="Bentley S.D."/>
            <person name="Kilian M."/>
            <person name="Ehrlich G.D."/>
            <person name="Rappuoli R."/>
            <person name="Moxon E.R."/>
            <person name="Masignani V."/>
        </authorList>
    </citation>
    <scope>NUCLEOTIDE SEQUENCE [LARGE SCALE GENOMIC DNA]</scope>
    <source>
        <strain>70585</strain>
    </source>
</reference>
<gene>
    <name evidence="1" type="primary">dltA</name>
    <name type="ordered locus">SP70585_2304</name>
</gene>
<accession>C1CB20</accession>
<name>DLTA_STRP7</name>
<keyword id="KW-0067">ATP-binding</keyword>
<keyword id="KW-0963">Cytoplasm</keyword>
<keyword id="KW-0436">Ligase</keyword>
<keyword id="KW-0547">Nucleotide-binding</keyword>
<proteinExistence type="inferred from homology"/>
<evidence type="ECO:0000255" key="1">
    <source>
        <dbReference type="HAMAP-Rule" id="MF_00593"/>
    </source>
</evidence>
<protein>
    <recommendedName>
        <fullName evidence="1">D-alanine--D-alanyl carrier protein ligase</fullName>
        <shortName evidence="1">DCL</shortName>
        <ecNumber evidence="1">6.2.1.54</ecNumber>
    </recommendedName>
    <alternativeName>
        <fullName evidence="1">D-alanine--poly(phosphoribitol) ligase subunit 1</fullName>
    </alternativeName>
    <alternativeName>
        <fullName evidence="1">D-alanine-activating enzyme</fullName>
        <shortName evidence="1">DAE</shortName>
    </alternativeName>
</protein>
<comment type="function">
    <text evidence="1">Catalyzes the first step in the D-alanylation of lipoteichoic acid (LTA), the activation of D-alanine and its transfer onto the D-alanyl carrier protein (Dcp) DltC. In an ATP-dependent two-step reaction, forms a high energy D-alanyl-AMP intermediate, followed by transfer of the D-alanyl residue as a thiol ester to the phosphopantheinyl prosthetic group of the Dcp. D-alanylation of LTA plays an important role in modulating the properties of the cell wall in Gram-positive bacteria, influencing the net charge of the cell wall.</text>
</comment>
<comment type="catalytic activity">
    <reaction evidence="1">
        <text>holo-[D-alanyl-carrier protein] + D-alanine + ATP = D-alanyl-[D-alanyl-carrier protein] + AMP + diphosphate</text>
        <dbReference type="Rhea" id="RHEA:55132"/>
        <dbReference type="Rhea" id="RHEA-COMP:14102"/>
        <dbReference type="Rhea" id="RHEA-COMP:14103"/>
        <dbReference type="ChEBI" id="CHEBI:30616"/>
        <dbReference type="ChEBI" id="CHEBI:33019"/>
        <dbReference type="ChEBI" id="CHEBI:57416"/>
        <dbReference type="ChEBI" id="CHEBI:64479"/>
        <dbReference type="ChEBI" id="CHEBI:138620"/>
        <dbReference type="ChEBI" id="CHEBI:456215"/>
        <dbReference type="EC" id="6.2.1.54"/>
    </reaction>
</comment>
<comment type="pathway">
    <text evidence="1">Cell wall biogenesis; lipoteichoic acid biosynthesis.</text>
</comment>
<comment type="subcellular location">
    <subcellularLocation>
        <location evidence="1">Cytoplasm</location>
    </subcellularLocation>
</comment>
<comment type="similarity">
    <text evidence="1">Belongs to the ATP-dependent AMP-binding enzyme family. DltA subfamily.</text>
</comment>
<sequence>MSNKPIADMIETIEHFAQTQPSYPVYNVLGQEHTYGDLKSDSDSLAAVIDQLGLPEKSPVVVFGGQEYEMLATFVALTKSGHAYIPIDSHSALERVSAILEVAEPSLIIAISAFPLEQVSTPMINLAQVQEAFAQGNNYEITHPVKGDDNYYIIFTSGTTGQPKGVQISHDNLLSFTNWMITDKEFATPSRPQMLAQPPYSFDLSVMYWAPTLALGGTLFTLPSVITQDFKQLFAAIFSLPIAIWTSTPSFADMAMLSEYFNSEKMPGITHFYFDGEELTVKTAQKLRERFPNARIINAYGPTEATVALSAVAVTDEMLATLKRLPIGYTKADSPTFIIDEEGNKLPNGEQGEIIVSGPAVSKGYMNNPEKTAEAFFEFEDLPAYHTGDVGTMTDEGLLLYGGRMDFQIKFNGYRIELEDVSQNLNKSRFIESAVAVPRYNKDHKVQNLLAYVILKDSVREQFERDIDITKAIKEDLTDIMMSYMIPSKFLYRDSLPLTPNGKIDIKGLINEVNKR</sequence>
<feature type="chain" id="PRO_1000146974" description="D-alanine--D-alanyl carrier protein ligase">
    <location>
        <begin position="1"/>
        <end position="516"/>
    </location>
</feature>
<feature type="binding site" evidence="1">
    <location>
        <begin position="156"/>
        <end position="157"/>
    </location>
    <ligand>
        <name>ATP</name>
        <dbReference type="ChEBI" id="CHEBI:30616"/>
    </ligand>
</feature>
<feature type="binding site" evidence="1">
    <location>
        <position position="203"/>
    </location>
    <ligand>
        <name>D-alanine</name>
        <dbReference type="ChEBI" id="CHEBI:57416"/>
    </ligand>
</feature>
<feature type="binding site" evidence="1">
    <location>
        <begin position="298"/>
        <end position="303"/>
    </location>
    <ligand>
        <name>ATP</name>
        <dbReference type="ChEBI" id="CHEBI:30616"/>
    </ligand>
</feature>
<feature type="binding site" evidence="1">
    <location>
        <position position="307"/>
    </location>
    <ligand>
        <name>D-alanine</name>
        <dbReference type="ChEBI" id="CHEBI:57416"/>
    </ligand>
</feature>
<feature type="binding site" evidence="1">
    <location>
        <position position="389"/>
    </location>
    <ligand>
        <name>ATP</name>
        <dbReference type="ChEBI" id="CHEBI:30616"/>
    </ligand>
</feature>
<feature type="binding site" evidence="1">
    <location>
        <begin position="401"/>
        <end position="404"/>
    </location>
    <ligand>
        <name>ATP</name>
        <dbReference type="ChEBI" id="CHEBI:30616"/>
    </ligand>
</feature>
<feature type="binding site" evidence="1">
    <location>
        <position position="503"/>
    </location>
    <ligand>
        <name>ATP</name>
        <dbReference type="ChEBI" id="CHEBI:30616"/>
    </ligand>
</feature>
<feature type="binding site" evidence="1">
    <location>
        <position position="503"/>
    </location>
    <ligand>
        <name>D-alanine</name>
        <dbReference type="ChEBI" id="CHEBI:57416"/>
    </ligand>
</feature>